<reference key="1">
    <citation type="journal article" date="2003" name="DNA Seq.">
        <title>Cloning and characterization of human synaptotagmin 10 gene.</title>
        <authorList>
            <person name="Zhao E."/>
            <person name="Li Y."/>
            <person name="Fu X."/>
            <person name="Zeng L."/>
            <person name="Zeng H."/>
            <person name="Jin W."/>
            <person name="Chen J."/>
            <person name="Yin G."/>
            <person name="Qian J."/>
            <person name="Ying K."/>
            <person name="Xie Y."/>
            <person name="Zhao R.C."/>
            <person name="Mao Y."/>
        </authorList>
    </citation>
    <scope>NUCLEOTIDE SEQUENCE [MRNA]</scope>
    <scope>TISSUE SPECIFICITY</scope>
    <source>
        <tissue>Fetal brain</tissue>
    </source>
</reference>
<reference key="2">
    <citation type="journal article" date="2004" name="Genome Res.">
        <title>The status, quality, and expansion of the NIH full-length cDNA project: the Mammalian Gene Collection (MGC).</title>
        <authorList>
            <consortium name="The MGC Project Team"/>
        </authorList>
    </citation>
    <scope>NUCLEOTIDE SEQUENCE [LARGE SCALE MRNA]</scope>
</reference>
<evidence type="ECO:0000250" key="1">
    <source>
        <dbReference type="UniProtKB" id="O08625"/>
    </source>
</evidence>
<evidence type="ECO:0000250" key="2">
    <source>
        <dbReference type="UniProtKB" id="O35681"/>
    </source>
</evidence>
<evidence type="ECO:0000250" key="3">
    <source>
        <dbReference type="UniProtKB" id="P40748"/>
    </source>
</evidence>
<evidence type="ECO:0000250" key="4">
    <source>
        <dbReference type="UniProtKB" id="Q9R0N4"/>
    </source>
</evidence>
<evidence type="ECO:0000255" key="5"/>
<evidence type="ECO:0000255" key="6">
    <source>
        <dbReference type="PROSITE-ProRule" id="PRU00041"/>
    </source>
</evidence>
<evidence type="ECO:0000269" key="7">
    <source>
    </source>
</evidence>
<evidence type="ECO:0000305" key="8"/>
<gene>
    <name type="primary">SYT10</name>
</gene>
<name>SYT10_HUMAN</name>
<proteinExistence type="evidence at protein level"/>
<sequence length="523" mass="59127">MSFHKEDGVNSLCQKALHIVTELCFAGQVEWEKCSGIFPRDRGSQGGSSTDISVSLLAVVVSFCGLALLVVSLFVFWKLCWPCWKSKPVTSNITTLPQSISSAPTEVFETEEKKEIKENEKPAVKAIEPAIKISHTSPDIPAEVQTALKEHLIKHARVQRQITEPTSSTRHSSFRRHLPRQMQVSSVDFSMGTEPVLQRGETTTSIGRIKPELYKQKSVDSEGNQNEDVKICGKLNFTLQYDYENELLVVKIIKALDLPAKDFTGTSDPYVKMYLLPDRKKKFQTRVHRKTLNPLFDETFQFPVAYDQLSNRKLHFSVYDFDRFSRHDMIGEVILDNLFEVSDLSREATVWKDIHCATTESIDLGEIMFSLCYLPTAGRMTLTVIKCRNLKAMDITGSSDPYVKVSLMCEGRRLKKRKTTTKKNTLNPVYNEAIIFDIPPENVDQVSLSIAVMDYDRVGHNEVIGVCRTGLDAEGLGRDHWNEMLAYHRKPITHWHPLLELPGRATSFDSQGSCPSPKPPSTP</sequence>
<comment type="function">
    <text evidence="1 4">Ca(2+) sensor specifically required for the Ca(2+)-dependent exocytosis of secretory vesicles containing IGF1 in neurons of the olfactory bulb. Exocytosis of IGF1 is required for sensory perception of smell. Not involved in Ca(2+)-dependent synaptic vesicle exocytosis (By similarity). Acts through Ca(2+) and phospholipid binding to the C2 domain: Ca(2+) induces binding of the C2-domains to phospholipid membranes and to assembled SNARE-complexes; both actions contribute to triggering exocytosis (By similarity).</text>
</comment>
<comment type="cofactor">
    <cofactor evidence="6">
        <name>Ca(2+)</name>
        <dbReference type="ChEBI" id="CHEBI:29108"/>
    </cofactor>
    <text evidence="3">Binds 3 Ca(2+) ions per subunit. The ions are bound to the C2 domains.</text>
</comment>
<comment type="subunit">
    <text evidence="4">Homodimer; disulfide-linked via the cysteine motif. Can also form heterodimers with SYT3, SYT6, SYT7 and SYT9.</text>
</comment>
<comment type="subcellular location">
    <subcellularLocation>
        <location evidence="4">Cytoplasmic vesicle</location>
        <location evidence="4">Secretory vesicle membrane</location>
        <topology evidence="5">Single-pass membrane protein</topology>
    </subcellularLocation>
    <text evidence="4">Localizes to neuronal vesicles containing IGF1 that are not enriched at synapses. Does not colocalize with synaptic vesicles or with the Golgi apparatus.</text>
</comment>
<comment type="tissue specificity">
    <text evidence="7">Expressed only in pancreas, lung and kidney.</text>
</comment>
<comment type="domain">
    <text evidence="2">The cysteine motif mediates homo- or heterodimer formation via formation of disulfide bonds.</text>
</comment>
<comment type="domain">
    <text evidence="1">The first C2 domain mediates Ca(2+)-dependent phospholipid binding.</text>
</comment>
<comment type="similarity">
    <text evidence="8">Belongs to the synaptotagmin family.</text>
</comment>
<dbReference type="EMBL" id="AY198413">
    <property type="protein sequence ID" value="AAP37477.1"/>
    <property type="molecule type" value="mRNA"/>
</dbReference>
<dbReference type="EMBL" id="BC101024">
    <property type="protein sequence ID" value="AAI01025.1"/>
    <property type="molecule type" value="mRNA"/>
</dbReference>
<dbReference type="CCDS" id="CCDS8732.1"/>
<dbReference type="RefSeq" id="NP_945343.1">
    <property type="nucleotide sequence ID" value="NM_198992.4"/>
</dbReference>
<dbReference type="SMR" id="Q6XYQ8"/>
<dbReference type="BioGRID" id="131131">
    <property type="interactions" value="6"/>
</dbReference>
<dbReference type="FunCoup" id="Q6XYQ8">
    <property type="interactions" value="63"/>
</dbReference>
<dbReference type="IntAct" id="Q6XYQ8">
    <property type="interactions" value="2"/>
</dbReference>
<dbReference type="STRING" id="9606.ENSP00000228567"/>
<dbReference type="iPTMnet" id="Q6XYQ8"/>
<dbReference type="PhosphoSitePlus" id="Q6XYQ8"/>
<dbReference type="BioMuta" id="SYT10"/>
<dbReference type="DMDM" id="52783447"/>
<dbReference type="jPOST" id="Q6XYQ8"/>
<dbReference type="MassIVE" id="Q6XYQ8"/>
<dbReference type="PaxDb" id="9606-ENSP00000228567"/>
<dbReference type="PeptideAtlas" id="Q6XYQ8"/>
<dbReference type="ProteomicsDB" id="67825"/>
<dbReference type="Antibodypedia" id="67234">
    <property type="antibodies" value="146 antibodies from 26 providers"/>
</dbReference>
<dbReference type="DNASU" id="341359"/>
<dbReference type="Ensembl" id="ENST00000228567.7">
    <property type="protein sequence ID" value="ENSP00000228567.3"/>
    <property type="gene ID" value="ENSG00000110975.8"/>
</dbReference>
<dbReference type="GeneID" id="341359"/>
<dbReference type="KEGG" id="hsa:341359"/>
<dbReference type="MANE-Select" id="ENST00000228567.7">
    <property type="protein sequence ID" value="ENSP00000228567.3"/>
    <property type="RefSeq nucleotide sequence ID" value="NM_198992.4"/>
    <property type="RefSeq protein sequence ID" value="NP_945343.1"/>
</dbReference>
<dbReference type="UCSC" id="uc001rll.2">
    <property type="organism name" value="human"/>
</dbReference>
<dbReference type="AGR" id="HGNC:19266"/>
<dbReference type="CTD" id="341359"/>
<dbReference type="DisGeNET" id="341359"/>
<dbReference type="GeneCards" id="SYT10"/>
<dbReference type="HGNC" id="HGNC:19266">
    <property type="gene designation" value="SYT10"/>
</dbReference>
<dbReference type="HPA" id="ENSG00000110975">
    <property type="expression patterns" value="Tissue enhanced (fallopian)"/>
</dbReference>
<dbReference type="neXtProt" id="NX_Q6XYQ8"/>
<dbReference type="OpenTargets" id="ENSG00000110975"/>
<dbReference type="PharmGKB" id="PA134866255"/>
<dbReference type="VEuPathDB" id="HostDB:ENSG00000110975"/>
<dbReference type="eggNOG" id="KOG1028">
    <property type="taxonomic scope" value="Eukaryota"/>
</dbReference>
<dbReference type="GeneTree" id="ENSGT00940000158899"/>
<dbReference type="HOGENOM" id="CLU_023008_8_3_1"/>
<dbReference type="InParanoid" id="Q6XYQ8"/>
<dbReference type="OMA" id="IWKDIHC"/>
<dbReference type="OrthoDB" id="67700at2759"/>
<dbReference type="PAN-GO" id="Q6XYQ8">
    <property type="GO annotations" value="11 GO annotations based on evolutionary models"/>
</dbReference>
<dbReference type="PhylomeDB" id="Q6XYQ8"/>
<dbReference type="TreeFam" id="TF315600"/>
<dbReference type="PathwayCommons" id="Q6XYQ8"/>
<dbReference type="Reactome" id="R-HSA-6794361">
    <property type="pathway name" value="Neurexins and neuroligins"/>
</dbReference>
<dbReference type="Reactome" id="R-HSA-9768919">
    <property type="pathway name" value="NPAS4 regulates expression of target genes"/>
</dbReference>
<dbReference type="SignaLink" id="Q6XYQ8"/>
<dbReference type="BioGRID-ORCS" id="341359">
    <property type="hits" value="4 hits in 1150 CRISPR screens"/>
</dbReference>
<dbReference type="GenomeRNAi" id="341359"/>
<dbReference type="Pharos" id="Q6XYQ8">
    <property type="development level" value="Tbio"/>
</dbReference>
<dbReference type="PRO" id="PR:Q6XYQ8"/>
<dbReference type="Proteomes" id="UP000005640">
    <property type="component" value="Chromosome 12"/>
</dbReference>
<dbReference type="RNAct" id="Q6XYQ8">
    <property type="molecule type" value="protein"/>
</dbReference>
<dbReference type="Bgee" id="ENSG00000110975">
    <property type="expression patterns" value="Expressed in male germ line stem cell (sensu Vertebrata) in testis and 73 other cell types or tissues"/>
</dbReference>
<dbReference type="ExpressionAtlas" id="Q6XYQ8">
    <property type="expression patterns" value="baseline and differential"/>
</dbReference>
<dbReference type="GO" id="GO:0070382">
    <property type="term" value="C:exocytic vesicle"/>
    <property type="evidence" value="ECO:0000250"/>
    <property type="project" value="UniProtKB"/>
</dbReference>
<dbReference type="GO" id="GO:0098978">
    <property type="term" value="C:glutamatergic synapse"/>
    <property type="evidence" value="ECO:0007669"/>
    <property type="project" value="Ensembl"/>
</dbReference>
<dbReference type="GO" id="GO:0005886">
    <property type="term" value="C:plasma membrane"/>
    <property type="evidence" value="ECO:0000318"/>
    <property type="project" value="GO_Central"/>
</dbReference>
<dbReference type="GO" id="GO:0098793">
    <property type="term" value="C:presynapse"/>
    <property type="evidence" value="ECO:0007669"/>
    <property type="project" value="Ensembl"/>
</dbReference>
<dbReference type="GO" id="GO:0030658">
    <property type="term" value="C:transport vesicle membrane"/>
    <property type="evidence" value="ECO:0007669"/>
    <property type="project" value="UniProtKB-SubCell"/>
</dbReference>
<dbReference type="GO" id="GO:0005509">
    <property type="term" value="F:calcium ion binding"/>
    <property type="evidence" value="ECO:0000250"/>
    <property type="project" value="UniProtKB"/>
</dbReference>
<dbReference type="GO" id="GO:0061891">
    <property type="term" value="F:calcium ion sensor activity"/>
    <property type="evidence" value="ECO:0000318"/>
    <property type="project" value="GO_Central"/>
</dbReference>
<dbReference type="GO" id="GO:0005544">
    <property type="term" value="F:calcium-dependent phospholipid binding"/>
    <property type="evidence" value="ECO:0000318"/>
    <property type="project" value="GO_Central"/>
</dbReference>
<dbReference type="GO" id="GO:0005546">
    <property type="term" value="F:phosphatidylinositol-4,5-bisphosphate binding"/>
    <property type="evidence" value="ECO:0007669"/>
    <property type="project" value="Ensembl"/>
</dbReference>
<dbReference type="GO" id="GO:0001786">
    <property type="term" value="F:phosphatidylserine binding"/>
    <property type="evidence" value="ECO:0007669"/>
    <property type="project" value="Ensembl"/>
</dbReference>
<dbReference type="GO" id="GO:0046982">
    <property type="term" value="F:protein heterodimerization activity"/>
    <property type="evidence" value="ECO:0007669"/>
    <property type="project" value="Ensembl"/>
</dbReference>
<dbReference type="GO" id="GO:0042803">
    <property type="term" value="F:protein homodimerization activity"/>
    <property type="evidence" value="ECO:0007669"/>
    <property type="project" value="Ensembl"/>
</dbReference>
<dbReference type="GO" id="GO:0000149">
    <property type="term" value="F:SNARE binding"/>
    <property type="evidence" value="ECO:0000318"/>
    <property type="project" value="GO_Central"/>
</dbReference>
<dbReference type="GO" id="GO:0007268">
    <property type="term" value="P:chemical synaptic transmission"/>
    <property type="evidence" value="ECO:0000250"/>
    <property type="project" value="UniProtKB"/>
</dbReference>
<dbReference type="GO" id="GO:0006887">
    <property type="term" value="P:exocytosis"/>
    <property type="evidence" value="ECO:0007669"/>
    <property type="project" value="UniProtKB-KW"/>
</dbReference>
<dbReference type="GO" id="GO:0045956">
    <property type="term" value="P:positive regulation of calcium ion-dependent exocytosis"/>
    <property type="evidence" value="ECO:0000250"/>
    <property type="project" value="UniProtKB"/>
</dbReference>
<dbReference type="GO" id="GO:0017158">
    <property type="term" value="P:regulation of calcium ion-dependent exocytosis"/>
    <property type="evidence" value="ECO:0000318"/>
    <property type="project" value="GO_Central"/>
</dbReference>
<dbReference type="GO" id="GO:0007608">
    <property type="term" value="P:sensory perception of smell"/>
    <property type="evidence" value="ECO:0000250"/>
    <property type="project" value="UniProtKB"/>
</dbReference>
<dbReference type="GO" id="GO:0016192">
    <property type="term" value="P:vesicle-mediated transport"/>
    <property type="evidence" value="ECO:0000318"/>
    <property type="project" value="GO_Central"/>
</dbReference>
<dbReference type="CDD" id="cd08385">
    <property type="entry name" value="C2A_Synaptotagmin-1-5-6-9-10"/>
    <property type="match status" value="1"/>
</dbReference>
<dbReference type="CDD" id="cd08403">
    <property type="entry name" value="C2B_Synaptotagmin-3-5-6-9-10"/>
    <property type="match status" value="1"/>
</dbReference>
<dbReference type="FunFam" id="2.60.40.150:FF:000005">
    <property type="entry name" value="Synaptotagmin 6"/>
    <property type="match status" value="1"/>
</dbReference>
<dbReference type="FunFam" id="2.60.40.150:FF:000011">
    <property type="entry name" value="Synaptotagmin 6"/>
    <property type="match status" value="1"/>
</dbReference>
<dbReference type="Gene3D" id="2.60.40.150">
    <property type="entry name" value="C2 domain"/>
    <property type="match status" value="2"/>
</dbReference>
<dbReference type="InterPro" id="IPR000008">
    <property type="entry name" value="C2_dom"/>
</dbReference>
<dbReference type="InterPro" id="IPR035892">
    <property type="entry name" value="C2_domain_sf"/>
</dbReference>
<dbReference type="InterPro" id="IPR001565">
    <property type="entry name" value="Synaptotagmin"/>
</dbReference>
<dbReference type="PANTHER" id="PTHR10024">
    <property type="entry name" value="SYNAPTOTAGMIN"/>
    <property type="match status" value="1"/>
</dbReference>
<dbReference type="PANTHER" id="PTHR10024:SF46">
    <property type="entry name" value="SYNAPTOTAGMIN-10"/>
    <property type="match status" value="1"/>
</dbReference>
<dbReference type="Pfam" id="PF00168">
    <property type="entry name" value="C2"/>
    <property type="match status" value="2"/>
</dbReference>
<dbReference type="PRINTS" id="PR00360">
    <property type="entry name" value="C2DOMAIN"/>
</dbReference>
<dbReference type="PRINTS" id="PR00399">
    <property type="entry name" value="SYNAPTOTAGMN"/>
</dbReference>
<dbReference type="SMART" id="SM00239">
    <property type="entry name" value="C2"/>
    <property type="match status" value="2"/>
</dbReference>
<dbReference type="SUPFAM" id="SSF49562">
    <property type="entry name" value="C2 domain (Calcium/lipid-binding domain, CaLB)"/>
    <property type="match status" value="2"/>
</dbReference>
<dbReference type="PROSITE" id="PS50004">
    <property type="entry name" value="C2"/>
    <property type="match status" value="2"/>
</dbReference>
<accession>Q6XYQ8</accession>
<accession>Q495U2</accession>
<feature type="chain" id="PRO_0000183965" description="Synaptotagmin-10">
    <location>
        <begin position="1"/>
        <end position="523"/>
    </location>
</feature>
<feature type="topological domain" description="Vesicular" evidence="5">
    <location>
        <begin position="1"/>
        <end position="55"/>
    </location>
</feature>
<feature type="transmembrane region" description="Helical" evidence="5">
    <location>
        <begin position="56"/>
        <end position="76"/>
    </location>
</feature>
<feature type="topological domain" description="Cytoplasmic" evidence="5">
    <location>
        <begin position="77"/>
        <end position="523"/>
    </location>
</feature>
<feature type="domain" description="C2 1" evidence="6">
    <location>
        <begin position="231"/>
        <end position="352"/>
    </location>
</feature>
<feature type="domain" description="C2 2" evidence="6">
    <location>
        <begin position="363"/>
        <end position="496"/>
    </location>
</feature>
<feature type="region of interest" description="Cysteine motif" evidence="2">
    <location>
        <begin position="13"/>
        <end position="35"/>
    </location>
</feature>
<feature type="binding site" evidence="6">
    <location>
        <position position="262"/>
    </location>
    <ligand>
        <name>Ca(2+)</name>
        <dbReference type="ChEBI" id="CHEBI:29108"/>
        <label>1</label>
    </ligand>
</feature>
<feature type="binding site" evidence="6">
    <location>
        <position position="262"/>
    </location>
    <ligand>
        <name>Ca(2+)</name>
        <dbReference type="ChEBI" id="CHEBI:29108"/>
        <label>2</label>
    </ligand>
</feature>
<feature type="binding site" evidence="6">
    <location>
        <position position="268"/>
    </location>
    <ligand>
        <name>Ca(2+)</name>
        <dbReference type="ChEBI" id="CHEBI:29108"/>
        <label>1</label>
    </ligand>
</feature>
<feature type="binding site" evidence="6">
    <location>
        <position position="320"/>
    </location>
    <ligand>
        <name>Ca(2+)</name>
        <dbReference type="ChEBI" id="CHEBI:29108"/>
        <label>1</label>
    </ligand>
</feature>
<feature type="binding site" evidence="6">
    <location>
        <position position="320"/>
    </location>
    <ligand>
        <name>Ca(2+)</name>
        <dbReference type="ChEBI" id="CHEBI:29108"/>
        <label>2</label>
    </ligand>
</feature>
<feature type="binding site" evidence="6">
    <location>
        <position position="321"/>
    </location>
    <ligand>
        <name>Ca(2+)</name>
        <dbReference type="ChEBI" id="CHEBI:29108"/>
        <label>1</label>
    </ligand>
</feature>
<feature type="binding site" evidence="6">
    <location>
        <position position="322"/>
    </location>
    <ligand>
        <name>Ca(2+)</name>
        <dbReference type="ChEBI" id="CHEBI:29108"/>
        <label>1</label>
    </ligand>
</feature>
<feature type="binding site" evidence="6">
    <location>
        <position position="322"/>
    </location>
    <ligand>
        <name>Ca(2+)</name>
        <dbReference type="ChEBI" id="CHEBI:29108"/>
        <label>2</label>
    </ligand>
</feature>
<feature type="binding site" evidence="6">
    <location>
        <position position="322"/>
    </location>
    <ligand>
        <name>Ca(2+)</name>
        <dbReference type="ChEBI" id="CHEBI:29108"/>
        <label>3</label>
    </ligand>
</feature>
<feature type="binding site" evidence="6">
    <location>
        <position position="325"/>
    </location>
    <ligand>
        <name>Ca(2+)</name>
        <dbReference type="ChEBI" id="CHEBI:29108"/>
        <label>3</label>
    </ligand>
</feature>
<feature type="binding site" evidence="6">
    <location>
        <position position="328"/>
    </location>
    <ligand>
        <name>Ca(2+)</name>
        <dbReference type="ChEBI" id="CHEBI:29108"/>
        <label>2</label>
    </ligand>
</feature>
<feature type="binding site" evidence="6">
    <location>
        <position position="328"/>
    </location>
    <ligand>
        <name>Ca(2+)</name>
        <dbReference type="ChEBI" id="CHEBI:29108"/>
        <label>3</label>
    </ligand>
</feature>
<feature type="binding site" evidence="6">
    <location>
        <position position="394"/>
    </location>
    <ligand>
        <name>Ca(2+)</name>
        <dbReference type="ChEBI" id="CHEBI:29108"/>
        <label>4</label>
    </ligand>
</feature>
<feature type="binding site" evidence="6">
    <location>
        <position position="400"/>
    </location>
    <ligand>
        <name>Ca(2+)</name>
        <dbReference type="ChEBI" id="CHEBI:29108"/>
        <label>4</label>
    </ligand>
</feature>
<feature type="binding site" evidence="6">
    <location>
        <position position="454"/>
    </location>
    <ligand>
        <name>Ca(2+)</name>
        <dbReference type="ChEBI" id="CHEBI:29108"/>
        <label>4</label>
    </ligand>
</feature>
<feature type="binding site" evidence="6">
    <location>
        <position position="456"/>
    </location>
    <ligand>
        <name>Ca(2+)</name>
        <dbReference type="ChEBI" id="CHEBI:29108"/>
        <label>4</label>
    </ligand>
</feature>
<feature type="modified residue" description="Phosphothreonine" evidence="4">
    <location>
        <position position="136"/>
    </location>
</feature>
<feature type="sequence variant" id="VAR_059826" description="In dbSNP:rs12317722.">
    <original>S</original>
    <variation>I</variation>
    <location>
        <position position="172"/>
    </location>
</feature>
<feature type="sequence variant" id="VAR_034529" description="In dbSNP:rs35190376.">
    <original>T</original>
    <variation>S</variation>
    <location>
        <position position="420"/>
    </location>
</feature>
<feature type="sequence variant" id="VAR_034530" description="In dbSNP:rs34190017.">
    <original>H</original>
    <variation>P</variation>
    <location>
        <position position="488"/>
    </location>
</feature>
<feature type="sequence variant" id="VAR_034531" description="In dbSNP:rs34361405.">
    <original>A</original>
    <variation>V</variation>
    <location>
        <position position="505"/>
    </location>
</feature>
<keyword id="KW-0106">Calcium</keyword>
<keyword id="KW-0968">Cytoplasmic vesicle</keyword>
<keyword id="KW-1015">Disulfide bond</keyword>
<keyword id="KW-0268">Exocytosis</keyword>
<keyword id="KW-0472">Membrane</keyword>
<keyword id="KW-0479">Metal-binding</keyword>
<keyword id="KW-0597">Phosphoprotein</keyword>
<keyword id="KW-1267">Proteomics identification</keyword>
<keyword id="KW-1185">Reference proteome</keyword>
<keyword id="KW-0677">Repeat</keyword>
<keyword id="KW-0812">Transmembrane</keyword>
<keyword id="KW-1133">Transmembrane helix</keyword>
<protein>
    <recommendedName>
        <fullName>Synaptotagmin-10</fullName>
    </recommendedName>
    <alternativeName>
        <fullName>Synaptotagmin X</fullName>
        <shortName>SytX</shortName>
    </alternativeName>
</protein>
<organism>
    <name type="scientific">Homo sapiens</name>
    <name type="common">Human</name>
    <dbReference type="NCBI Taxonomy" id="9606"/>
    <lineage>
        <taxon>Eukaryota</taxon>
        <taxon>Metazoa</taxon>
        <taxon>Chordata</taxon>
        <taxon>Craniata</taxon>
        <taxon>Vertebrata</taxon>
        <taxon>Euteleostomi</taxon>
        <taxon>Mammalia</taxon>
        <taxon>Eutheria</taxon>
        <taxon>Euarchontoglires</taxon>
        <taxon>Primates</taxon>
        <taxon>Haplorrhini</taxon>
        <taxon>Catarrhini</taxon>
        <taxon>Hominidae</taxon>
        <taxon>Homo</taxon>
    </lineage>
</organism>